<feature type="chain" id="PRO_0000376435" description="Probable cell division protein WhiA">
    <location>
        <begin position="1"/>
        <end position="316"/>
    </location>
</feature>
<feature type="DNA-binding region" description="H-T-H motif" evidence="1">
    <location>
        <begin position="275"/>
        <end position="309"/>
    </location>
</feature>
<reference key="1">
    <citation type="journal article" date="2009" name="J. Bacteriol.">
        <title>Complete genome sequence of the extremophilic Bacillus cereus strain Q1 with industrial applications.</title>
        <authorList>
            <person name="Xiong Z."/>
            <person name="Jiang Y."/>
            <person name="Qi D."/>
            <person name="Lu H."/>
            <person name="Yang F."/>
            <person name="Yang J."/>
            <person name="Chen L."/>
            <person name="Sun L."/>
            <person name="Xu X."/>
            <person name="Xue Y."/>
            <person name="Zhu Y."/>
            <person name="Jin Q."/>
        </authorList>
    </citation>
    <scope>NUCLEOTIDE SEQUENCE [LARGE SCALE GENOMIC DNA]</scope>
    <source>
        <strain>Q1</strain>
    </source>
</reference>
<protein>
    <recommendedName>
        <fullName evidence="1">Probable cell division protein WhiA</fullName>
    </recommendedName>
</protein>
<accession>B9J4Q7</accession>
<sequence>MSFASETKKELTNLEMKECCEKAELSALLRMNGSLSFSNRRLSIDIQTENAAIARRIYTLLKKGYDVTVELLVRKKMRLKKNNVYIVRLVEKSREILADLHIVRDDFSFIRNISQELIEKKCCKRSYLRGAFLAGGSVNNPETSSYHLEIFSLYKEHNDAICELMNGFDLNSKTLERRKGYITYLKEAEKITEFLNIIGAHNALLRFEDIRIVRDMRNSVNRLVNCETANLNKTIGAALRQIENIRYIDETVGLDILPDKLREIAQLRRDYQDVTLKELGEMVSGGKISKSGINHRLRKIDDIAEKLRAGETVAKK</sequence>
<proteinExistence type="inferred from homology"/>
<gene>
    <name evidence="1" type="primary">whiA</name>
    <name type="ordered locus">BCQ_4974</name>
</gene>
<comment type="function">
    <text evidence="1">Involved in cell division and chromosome segregation.</text>
</comment>
<comment type="similarity">
    <text evidence="1">Belongs to the WhiA family.</text>
</comment>
<comment type="sequence caution" evidence="2">
    <conflict type="erroneous initiation">
        <sequence resource="EMBL-CDS" id="ACM15374"/>
    </conflict>
</comment>
<evidence type="ECO:0000255" key="1">
    <source>
        <dbReference type="HAMAP-Rule" id="MF_01420"/>
    </source>
</evidence>
<evidence type="ECO:0000305" key="2"/>
<organism>
    <name type="scientific">Bacillus cereus (strain Q1)</name>
    <dbReference type="NCBI Taxonomy" id="361100"/>
    <lineage>
        <taxon>Bacteria</taxon>
        <taxon>Bacillati</taxon>
        <taxon>Bacillota</taxon>
        <taxon>Bacilli</taxon>
        <taxon>Bacillales</taxon>
        <taxon>Bacillaceae</taxon>
        <taxon>Bacillus</taxon>
        <taxon>Bacillus cereus group</taxon>
    </lineage>
</organism>
<name>WHIA_BACCQ</name>
<dbReference type="EMBL" id="CP000227">
    <property type="protein sequence ID" value="ACM15374.1"/>
    <property type="status" value="ALT_INIT"/>
    <property type="molecule type" value="Genomic_DNA"/>
</dbReference>
<dbReference type="SMR" id="B9J4Q7"/>
<dbReference type="KEGG" id="bcq:BCQ_4974"/>
<dbReference type="HOGENOM" id="CLU_053282_0_0_9"/>
<dbReference type="Proteomes" id="UP000000441">
    <property type="component" value="Chromosome"/>
</dbReference>
<dbReference type="GO" id="GO:0003677">
    <property type="term" value="F:DNA binding"/>
    <property type="evidence" value="ECO:0007669"/>
    <property type="project" value="UniProtKB-UniRule"/>
</dbReference>
<dbReference type="GO" id="GO:0051301">
    <property type="term" value="P:cell division"/>
    <property type="evidence" value="ECO:0007669"/>
    <property type="project" value="UniProtKB-UniRule"/>
</dbReference>
<dbReference type="GO" id="GO:0043937">
    <property type="term" value="P:regulation of sporulation"/>
    <property type="evidence" value="ECO:0007669"/>
    <property type="project" value="InterPro"/>
</dbReference>
<dbReference type="FunFam" id="3.10.28.10:FF:000002">
    <property type="entry name" value="Probable cell division protein WhiA"/>
    <property type="match status" value="1"/>
</dbReference>
<dbReference type="Gene3D" id="3.10.28.10">
    <property type="entry name" value="Homing endonucleases"/>
    <property type="match status" value="1"/>
</dbReference>
<dbReference type="HAMAP" id="MF_01420">
    <property type="entry name" value="HTH_type_WhiA"/>
    <property type="match status" value="1"/>
</dbReference>
<dbReference type="InterPro" id="IPR027434">
    <property type="entry name" value="Homing_endonucl"/>
</dbReference>
<dbReference type="InterPro" id="IPR018478">
    <property type="entry name" value="Sporu_reg_WhiA_N_dom"/>
</dbReference>
<dbReference type="InterPro" id="IPR003802">
    <property type="entry name" value="Sporulation_regulator_WhiA"/>
</dbReference>
<dbReference type="InterPro" id="IPR023054">
    <property type="entry name" value="Sporulation_regulator_WhiA_C"/>
</dbReference>
<dbReference type="InterPro" id="IPR039518">
    <property type="entry name" value="WhiA_LAGLIDADG_dom"/>
</dbReference>
<dbReference type="NCBIfam" id="TIGR00647">
    <property type="entry name" value="DNA_bind_WhiA"/>
    <property type="match status" value="1"/>
</dbReference>
<dbReference type="PANTHER" id="PTHR37307">
    <property type="entry name" value="CELL DIVISION PROTEIN WHIA-RELATED"/>
    <property type="match status" value="1"/>
</dbReference>
<dbReference type="PANTHER" id="PTHR37307:SF1">
    <property type="entry name" value="CELL DIVISION PROTEIN WHIA-RELATED"/>
    <property type="match status" value="1"/>
</dbReference>
<dbReference type="Pfam" id="PF02650">
    <property type="entry name" value="HTH_WhiA"/>
    <property type="match status" value="1"/>
</dbReference>
<dbReference type="Pfam" id="PF14527">
    <property type="entry name" value="LAGLIDADG_WhiA"/>
    <property type="match status" value="1"/>
</dbReference>
<dbReference type="Pfam" id="PF10298">
    <property type="entry name" value="WhiA_N"/>
    <property type="match status" value="1"/>
</dbReference>
<dbReference type="SUPFAM" id="SSF55608">
    <property type="entry name" value="Homing endonucleases"/>
    <property type="match status" value="1"/>
</dbReference>
<keyword id="KW-0131">Cell cycle</keyword>
<keyword id="KW-0132">Cell division</keyword>
<keyword id="KW-0238">DNA-binding</keyword>